<name>GCSH2_PSEAE</name>
<reference key="1">
    <citation type="journal article" date="2000" name="Nature">
        <title>Complete genome sequence of Pseudomonas aeruginosa PAO1, an opportunistic pathogen.</title>
        <authorList>
            <person name="Stover C.K."/>
            <person name="Pham X.-Q.T."/>
            <person name="Erwin A.L."/>
            <person name="Mizoguchi S.D."/>
            <person name="Warrener P."/>
            <person name="Hickey M.J."/>
            <person name="Brinkman F.S.L."/>
            <person name="Hufnagle W.O."/>
            <person name="Kowalik D.J."/>
            <person name="Lagrou M."/>
            <person name="Garber R.L."/>
            <person name="Goltry L."/>
            <person name="Tolentino E."/>
            <person name="Westbrock-Wadman S."/>
            <person name="Yuan Y."/>
            <person name="Brody L.L."/>
            <person name="Coulter S.N."/>
            <person name="Folger K.R."/>
            <person name="Kas A."/>
            <person name="Larbig K."/>
            <person name="Lim R.M."/>
            <person name="Smith K.A."/>
            <person name="Spencer D.H."/>
            <person name="Wong G.K.-S."/>
            <person name="Wu Z."/>
            <person name="Paulsen I.T."/>
            <person name="Reizer J."/>
            <person name="Saier M.H. Jr."/>
            <person name="Hancock R.E.W."/>
            <person name="Lory S."/>
            <person name="Olson M.V."/>
        </authorList>
    </citation>
    <scope>NUCLEOTIDE SEQUENCE [LARGE SCALE GENOMIC DNA]</scope>
    <source>
        <strain>ATCC 15692 / DSM 22644 / CIP 104116 / JCM 14847 / LMG 12228 / 1C / PRS 101 / PAO1</strain>
    </source>
</reference>
<organism>
    <name type="scientific">Pseudomonas aeruginosa (strain ATCC 15692 / DSM 22644 / CIP 104116 / JCM 14847 / LMG 12228 / 1C / PRS 101 / PAO1)</name>
    <dbReference type="NCBI Taxonomy" id="208964"/>
    <lineage>
        <taxon>Bacteria</taxon>
        <taxon>Pseudomonadati</taxon>
        <taxon>Pseudomonadota</taxon>
        <taxon>Gammaproteobacteria</taxon>
        <taxon>Pseudomonadales</taxon>
        <taxon>Pseudomonadaceae</taxon>
        <taxon>Pseudomonas</taxon>
    </lineage>
</organism>
<protein>
    <recommendedName>
        <fullName evidence="1">Glycine cleavage system H protein 2</fullName>
    </recommendedName>
</protein>
<keyword id="KW-0450">Lipoyl</keyword>
<keyword id="KW-1185">Reference proteome</keyword>
<proteinExistence type="inferred from homology"/>
<comment type="function">
    <text evidence="1">The glycine cleavage system catalyzes the degradation of glycine. The H protein shuttles the methylamine group of glycine from the P protein to the T protein.</text>
</comment>
<comment type="cofactor">
    <cofactor evidence="1">
        <name>(R)-lipoate</name>
        <dbReference type="ChEBI" id="CHEBI:83088"/>
    </cofactor>
    <text evidence="1">Binds 1 lipoyl cofactor covalently.</text>
</comment>
<comment type="subunit">
    <text evidence="1">The glycine cleavage system is composed of four proteins: P, T, L and H.</text>
</comment>
<comment type="similarity">
    <text evidence="1">Belongs to the GcvH family.</text>
</comment>
<dbReference type="EMBL" id="AE004091">
    <property type="protein sequence ID" value="AAG08599.1"/>
    <property type="molecule type" value="Genomic_DNA"/>
</dbReference>
<dbReference type="PIR" id="F82994">
    <property type="entry name" value="F82994"/>
</dbReference>
<dbReference type="SMR" id="Q9HTX6"/>
<dbReference type="FunCoup" id="Q9HTX6">
    <property type="interactions" value="700"/>
</dbReference>
<dbReference type="STRING" id="208964.PA5214"/>
<dbReference type="PaxDb" id="208964-PA5214"/>
<dbReference type="KEGG" id="pae:PA5214"/>
<dbReference type="PATRIC" id="fig|208964.12.peg.5464"/>
<dbReference type="PseudoCAP" id="PA5214"/>
<dbReference type="HOGENOM" id="CLU_097408_2_1_6"/>
<dbReference type="InParanoid" id="Q9HTX6"/>
<dbReference type="OrthoDB" id="9796712at2"/>
<dbReference type="PhylomeDB" id="Q9HTX6"/>
<dbReference type="BioCyc" id="PAER208964:G1FZ6-5333-MONOMER"/>
<dbReference type="Proteomes" id="UP000002438">
    <property type="component" value="Chromosome"/>
</dbReference>
<dbReference type="GO" id="GO:0005829">
    <property type="term" value="C:cytosol"/>
    <property type="evidence" value="ECO:0000318"/>
    <property type="project" value="GO_Central"/>
</dbReference>
<dbReference type="GO" id="GO:0005960">
    <property type="term" value="C:glycine cleavage complex"/>
    <property type="evidence" value="ECO:0007669"/>
    <property type="project" value="InterPro"/>
</dbReference>
<dbReference type="GO" id="GO:0019464">
    <property type="term" value="P:glycine decarboxylation via glycine cleavage system"/>
    <property type="evidence" value="ECO:0007669"/>
    <property type="project" value="UniProtKB-UniRule"/>
</dbReference>
<dbReference type="CDD" id="cd06848">
    <property type="entry name" value="GCS_H"/>
    <property type="match status" value="1"/>
</dbReference>
<dbReference type="Gene3D" id="2.40.50.100">
    <property type="match status" value="1"/>
</dbReference>
<dbReference type="HAMAP" id="MF_00272">
    <property type="entry name" value="GcvH"/>
    <property type="match status" value="1"/>
</dbReference>
<dbReference type="InterPro" id="IPR003016">
    <property type="entry name" value="2-oxoA_DH_lipoyl-BS"/>
</dbReference>
<dbReference type="InterPro" id="IPR000089">
    <property type="entry name" value="Biotin_lipoyl"/>
</dbReference>
<dbReference type="InterPro" id="IPR002930">
    <property type="entry name" value="GCV_H"/>
</dbReference>
<dbReference type="InterPro" id="IPR033753">
    <property type="entry name" value="GCV_H/Fam206"/>
</dbReference>
<dbReference type="InterPro" id="IPR017453">
    <property type="entry name" value="GCV_H_sub"/>
</dbReference>
<dbReference type="InterPro" id="IPR011053">
    <property type="entry name" value="Single_hybrid_motif"/>
</dbReference>
<dbReference type="NCBIfam" id="TIGR00527">
    <property type="entry name" value="gcvH"/>
    <property type="match status" value="1"/>
</dbReference>
<dbReference type="NCBIfam" id="NF002270">
    <property type="entry name" value="PRK01202.1"/>
    <property type="match status" value="1"/>
</dbReference>
<dbReference type="PANTHER" id="PTHR11715">
    <property type="entry name" value="GLYCINE CLEAVAGE SYSTEM H PROTEIN"/>
    <property type="match status" value="1"/>
</dbReference>
<dbReference type="PANTHER" id="PTHR11715:SF3">
    <property type="entry name" value="GLYCINE CLEAVAGE SYSTEM H PROTEIN-RELATED"/>
    <property type="match status" value="1"/>
</dbReference>
<dbReference type="Pfam" id="PF01597">
    <property type="entry name" value="GCV_H"/>
    <property type="match status" value="1"/>
</dbReference>
<dbReference type="SUPFAM" id="SSF51230">
    <property type="entry name" value="Single hybrid motif"/>
    <property type="match status" value="1"/>
</dbReference>
<dbReference type="PROSITE" id="PS50968">
    <property type="entry name" value="BIOTINYL_LIPOYL"/>
    <property type="match status" value="1"/>
</dbReference>
<dbReference type="PROSITE" id="PS00189">
    <property type="entry name" value="LIPOYL"/>
    <property type="match status" value="1"/>
</dbReference>
<sequence length="129" mass="13642">MSNIPAELRYAQSHEWARLEADGSVTVGISDHAQEALGDVVFIELPELGKTLAAGQEAGVVESVKAASDIYSPIGGEVIAINEALADTPEDVNNDPYVSWFFKLKPSNPAELDKLLDAAGYQAAVDAEG</sequence>
<gene>
    <name evidence="1" type="primary">gcvH2</name>
    <name type="ordered locus">PA5214</name>
</gene>
<feature type="chain" id="PRO_0000166234" description="Glycine cleavage system H protein 2">
    <location>
        <begin position="1"/>
        <end position="129"/>
    </location>
</feature>
<feature type="domain" description="Lipoyl-binding" evidence="2">
    <location>
        <begin position="24"/>
        <end position="105"/>
    </location>
</feature>
<feature type="modified residue" description="N6-lipoyllysine" evidence="1">
    <location>
        <position position="65"/>
    </location>
</feature>
<accession>Q9HTX6</accession>
<evidence type="ECO:0000255" key="1">
    <source>
        <dbReference type="HAMAP-Rule" id="MF_00272"/>
    </source>
</evidence>
<evidence type="ECO:0000255" key="2">
    <source>
        <dbReference type="PROSITE-ProRule" id="PRU01066"/>
    </source>
</evidence>